<gene>
    <name type="primary">minE</name>
    <name type="ordered locus">HP_0332</name>
</gene>
<proteinExistence type="evidence at protein level"/>
<evidence type="ECO:0000250" key="1"/>
<evidence type="ECO:0000305" key="2"/>
<evidence type="ECO:0007829" key="3">
    <source>
        <dbReference type="PDB" id="3KU7"/>
    </source>
</evidence>
<accession>O25099</accession>
<dbReference type="EMBL" id="AE000511">
    <property type="protein sequence ID" value="AAD07401.1"/>
    <property type="molecule type" value="Genomic_DNA"/>
</dbReference>
<dbReference type="PIR" id="D64561">
    <property type="entry name" value="D64561"/>
</dbReference>
<dbReference type="RefSeq" id="NP_207130.1">
    <property type="nucleotide sequence ID" value="NC_000915.1"/>
</dbReference>
<dbReference type="RefSeq" id="WP_000051415.1">
    <property type="nucleotide sequence ID" value="NC_018939.1"/>
</dbReference>
<dbReference type="PDB" id="3KU7">
    <property type="method" value="X-ray"/>
    <property type="resolution" value="2.80 A"/>
    <property type="chains" value="A/B=1-77"/>
</dbReference>
<dbReference type="PDB" id="3MCD">
    <property type="method" value="X-ray"/>
    <property type="resolution" value="3.20 A"/>
    <property type="chains" value="A/B=1-77"/>
</dbReference>
<dbReference type="PDBsum" id="3KU7"/>
<dbReference type="PDBsum" id="3MCD"/>
<dbReference type="SMR" id="O25099"/>
<dbReference type="DIP" id="DIP-3672N"/>
<dbReference type="IntAct" id="O25099">
    <property type="interactions" value="2"/>
</dbReference>
<dbReference type="MINT" id="O25099"/>
<dbReference type="STRING" id="85962.HP_0332"/>
<dbReference type="PaxDb" id="85962-C694_01680"/>
<dbReference type="EnsemblBacteria" id="AAD07401">
    <property type="protein sequence ID" value="AAD07401"/>
    <property type="gene ID" value="HP_0332"/>
</dbReference>
<dbReference type="KEGG" id="heo:C694_01680"/>
<dbReference type="KEGG" id="hpy:HP_0332"/>
<dbReference type="PATRIC" id="fig|85962.47.peg.354"/>
<dbReference type="eggNOG" id="COG0851">
    <property type="taxonomic scope" value="Bacteria"/>
</dbReference>
<dbReference type="InParanoid" id="O25099"/>
<dbReference type="OrthoDB" id="9802655at2"/>
<dbReference type="PhylomeDB" id="O25099"/>
<dbReference type="EvolutionaryTrace" id="O25099"/>
<dbReference type="Proteomes" id="UP000000429">
    <property type="component" value="Chromosome"/>
</dbReference>
<dbReference type="GO" id="GO:0051301">
    <property type="term" value="P:cell division"/>
    <property type="evidence" value="ECO:0007669"/>
    <property type="project" value="UniProtKB-KW"/>
</dbReference>
<dbReference type="GO" id="GO:0032955">
    <property type="term" value="P:regulation of division septum assembly"/>
    <property type="evidence" value="ECO:0007669"/>
    <property type="project" value="InterPro"/>
</dbReference>
<dbReference type="Gene3D" id="3.30.1070.10">
    <property type="entry name" value="Cell division topological specificity factor MinE"/>
    <property type="match status" value="1"/>
</dbReference>
<dbReference type="HAMAP" id="MF_00262">
    <property type="entry name" value="MinE"/>
    <property type="match status" value="1"/>
</dbReference>
<dbReference type="InterPro" id="IPR005527">
    <property type="entry name" value="MinE"/>
</dbReference>
<dbReference type="InterPro" id="IPR036707">
    <property type="entry name" value="MinE_sf"/>
</dbReference>
<dbReference type="NCBIfam" id="TIGR01215">
    <property type="entry name" value="minE"/>
    <property type="match status" value="1"/>
</dbReference>
<dbReference type="NCBIfam" id="NF001422">
    <property type="entry name" value="PRK00296.1"/>
    <property type="match status" value="1"/>
</dbReference>
<dbReference type="Pfam" id="PF03776">
    <property type="entry name" value="MinE"/>
    <property type="match status" value="1"/>
</dbReference>
<dbReference type="SUPFAM" id="SSF55229">
    <property type="entry name" value="Cell division protein MinE topological specificity domain"/>
    <property type="match status" value="1"/>
</dbReference>
<reference key="1">
    <citation type="journal article" date="1997" name="Nature">
        <title>The complete genome sequence of the gastric pathogen Helicobacter pylori.</title>
        <authorList>
            <person name="Tomb J.-F."/>
            <person name="White O."/>
            <person name="Kerlavage A.R."/>
            <person name="Clayton R.A."/>
            <person name="Sutton G.G."/>
            <person name="Fleischmann R.D."/>
            <person name="Ketchum K.A."/>
            <person name="Klenk H.-P."/>
            <person name="Gill S.R."/>
            <person name="Dougherty B.A."/>
            <person name="Nelson K.E."/>
            <person name="Quackenbush J."/>
            <person name="Zhou L."/>
            <person name="Kirkness E.F."/>
            <person name="Peterson S.N."/>
            <person name="Loftus B.J."/>
            <person name="Richardson D.L."/>
            <person name="Dodson R.J."/>
            <person name="Khalak H.G."/>
            <person name="Glodek A."/>
            <person name="McKenney K."/>
            <person name="FitzGerald L.M."/>
            <person name="Lee N."/>
            <person name="Adams M.D."/>
            <person name="Hickey E.K."/>
            <person name="Berg D.E."/>
            <person name="Gocayne J.D."/>
            <person name="Utterback T.R."/>
            <person name="Peterson J.D."/>
            <person name="Kelley J.M."/>
            <person name="Cotton M.D."/>
            <person name="Weidman J.F."/>
            <person name="Fujii C."/>
            <person name="Bowman C."/>
            <person name="Watthey L."/>
            <person name="Wallin E."/>
            <person name="Hayes W.S."/>
            <person name="Borodovsky M."/>
            <person name="Karp P.D."/>
            <person name="Smith H.O."/>
            <person name="Fraser C.M."/>
            <person name="Venter J.C."/>
        </authorList>
    </citation>
    <scope>NUCLEOTIDE SEQUENCE [LARGE SCALE GENOMIC DNA]</scope>
    <source>
        <strain>ATCC 700392 / 26695</strain>
    </source>
</reference>
<comment type="function">
    <text evidence="1">Prevents the cell division inhibition by proteins MinC and MinD at internal division sites while permitting inhibition at polar sites. This ensures cell division at the proper site by restricting the formation of a division septum at the midpoint of the long axis of the cell (By similarity).</text>
</comment>
<comment type="similarity">
    <text evidence="2">Belongs to the MinE family.</text>
</comment>
<sequence>MSLFDFFKNKGSAATATDRLKLILAKERTLNLPYMEEMRKEIIAVIQKYTKSSDIHFKTLDSNQSVETIEVEIILPR</sequence>
<organism>
    <name type="scientific">Helicobacter pylori (strain ATCC 700392 / 26695)</name>
    <name type="common">Campylobacter pylori</name>
    <dbReference type="NCBI Taxonomy" id="85962"/>
    <lineage>
        <taxon>Bacteria</taxon>
        <taxon>Pseudomonadati</taxon>
        <taxon>Campylobacterota</taxon>
        <taxon>Epsilonproteobacteria</taxon>
        <taxon>Campylobacterales</taxon>
        <taxon>Helicobacteraceae</taxon>
        <taxon>Helicobacter</taxon>
    </lineage>
</organism>
<name>MINE_HELPY</name>
<keyword id="KW-0002">3D-structure</keyword>
<keyword id="KW-0131">Cell cycle</keyword>
<keyword id="KW-0132">Cell division</keyword>
<keyword id="KW-1185">Reference proteome</keyword>
<feature type="chain" id="PRO_0000205877" description="Cell division topological specificity factor">
    <location>
        <begin position="1"/>
        <end position="77"/>
    </location>
</feature>
<feature type="strand" evidence="3">
    <location>
        <begin position="15"/>
        <end position="17"/>
    </location>
</feature>
<feature type="strand" evidence="3">
    <location>
        <begin position="19"/>
        <end position="29"/>
    </location>
</feature>
<feature type="helix" evidence="3">
    <location>
        <begin position="35"/>
        <end position="50"/>
    </location>
</feature>
<feature type="strand" evidence="3">
    <location>
        <begin position="54"/>
        <end position="58"/>
    </location>
</feature>
<feature type="strand" evidence="3">
    <location>
        <begin position="66"/>
        <end position="74"/>
    </location>
</feature>
<protein>
    <recommendedName>
        <fullName>Cell division topological specificity factor</fullName>
    </recommendedName>
</protein>